<proteinExistence type="inferred from homology"/>
<sequence length="139" mass="15503">MPTINQLVRKGRKSHKGKSKSPALGYVYNTFKKEEIKTPSPQKRGVATRVGTMTPKKPNSALRKYARVRLSNLIEVTAYIPGIGHNLQEHSVVLIRGGRVKDLPGVRYHIIRGTLDTAGVEGRMQSRSKYGAKKPKNKK</sequence>
<organism>
    <name type="scientific">Limosilactobacillus reuteri subsp. reuteri (strain JCM 1112)</name>
    <name type="common">Lactobacillus reuteri</name>
    <dbReference type="NCBI Taxonomy" id="557433"/>
    <lineage>
        <taxon>Bacteria</taxon>
        <taxon>Bacillati</taxon>
        <taxon>Bacillota</taxon>
        <taxon>Bacilli</taxon>
        <taxon>Lactobacillales</taxon>
        <taxon>Lactobacillaceae</taxon>
        <taxon>Limosilactobacillus</taxon>
    </lineage>
</organism>
<reference key="1">
    <citation type="journal article" date="2008" name="DNA Res.">
        <title>Comparative genome analysis of Lactobacillus reuteri and Lactobacillus fermentum reveal a genomic island for reuterin and cobalamin production.</title>
        <authorList>
            <person name="Morita H."/>
            <person name="Toh H."/>
            <person name="Fukuda S."/>
            <person name="Horikawa H."/>
            <person name="Oshima K."/>
            <person name="Suzuki T."/>
            <person name="Murakami M."/>
            <person name="Hisamatsu S."/>
            <person name="Kato Y."/>
            <person name="Takizawa T."/>
            <person name="Fukuoka H."/>
            <person name="Yoshimura T."/>
            <person name="Itoh K."/>
            <person name="O'Sullivan D.J."/>
            <person name="McKay L.L."/>
            <person name="Ohno H."/>
            <person name="Kikuchi J."/>
            <person name="Masaoka T."/>
            <person name="Hattori M."/>
        </authorList>
    </citation>
    <scope>NUCLEOTIDE SEQUENCE [LARGE SCALE GENOMIC DNA]</scope>
    <source>
        <strain>JCM 1112</strain>
    </source>
</reference>
<accession>B2G8Y2</accession>
<protein>
    <recommendedName>
        <fullName evidence="2">Small ribosomal subunit protein uS12</fullName>
    </recommendedName>
    <alternativeName>
        <fullName evidence="4">30S ribosomal protein S12</fullName>
    </alternativeName>
</protein>
<dbReference type="EMBL" id="AP007281">
    <property type="protein sequence ID" value="BAG25914.1"/>
    <property type="molecule type" value="Genomic_DNA"/>
</dbReference>
<dbReference type="RefSeq" id="WP_003668789.1">
    <property type="nucleotide sequence ID" value="NC_010609.1"/>
</dbReference>
<dbReference type="SMR" id="B2G8Y2"/>
<dbReference type="KEGG" id="lrf:LAR_1398"/>
<dbReference type="HOGENOM" id="CLU_104295_1_1_9"/>
<dbReference type="GO" id="GO:0015935">
    <property type="term" value="C:small ribosomal subunit"/>
    <property type="evidence" value="ECO:0007669"/>
    <property type="project" value="InterPro"/>
</dbReference>
<dbReference type="GO" id="GO:0019843">
    <property type="term" value="F:rRNA binding"/>
    <property type="evidence" value="ECO:0007669"/>
    <property type="project" value="UniProtKB-UniRule"/>
</dbReference>
<dbReference type="GO" id="GO:0003735">
    <property type="term" value="F:structural constituent of ribosome"/>
    <property type="evidence" value="ECO:0007669"/>
    <property type="project" value="InterPro"/>
</dbReference>
<dbReference type="GO" id="GO:0000049">
    <property type="term" value="F:tRNA binding"/>
    <property type="evidence" value="ECO:0007669"/>
    <property type="project" value="UniProtKB-UniRule"/>
</dbReference>
<dbReference type="GO" id="GO:0006412">
    <property type="term" value="P:translation"/>
    <property type="evidence" value="ECO:0007669"/>
    <property type="project" value="UniProtKB-UniRule"/>
</dbReference>
<dbReference type="CDD" id="cd03368">
    <property type="entry name" value="Ribosomal_S12"/>
    <property type="match status" value="1"/>
</dbReference>
<dbReference type="FunFam" id="2.40.50.140:FF:000001">
    <property type="entry name" value="30S ribosomal protein S12"/>
    <property type="match status" value="1"/>
</dbReference>
<dbReference type="Gene3D" id="2.40.50.140">
    <property type="entry name" value="Nucleic acid-binding proteins"/>
    <property type="match status" value="1"/>
</dbReference>
<dbReference type="HAMAP" id="MF_00403_B">
    <property type="entry name" value="Ribosomal_uS12_B"/>
    <property type="match status" value="1"/>
</dbReference>
<dbReference type="InterPro" id="IPR012340">
    <property type="entry name" value="NA-bd_OB-fold"/>
</dbReference>
<dbReference type="InterPro" id="IPR006032">
    <property type="entry name" value="Ribosomal_uS12"/>
</dbReference>
<dbReference type="InterPro" id="IPR005679">
    <property type="entry name" value="Ribosomal_uS12_bac"/>
</dbReference>
<dbReference type="NCBIfam" id="TIGR00981">
    <property type="entry name" value="rpsL_bact"/>
    <property type="match status" value="1"/>
</dbReference>
<dbReference type="PANTHER" id="PTHR11652">
    <property type="entry name" value="30S RIBOSOMAL PROTEIN S12 FAMILY MEMBER"/>
    <property type="match status" value="1"/>
</dbReference>
<dbReference type="Pfam" id="PF00164">
    <property type="entry name" value="Ribosom_S12_S23"/>
    <property type="match status" value="1"/>
</dbReference>
<dbReference type="PIRSF" id="PIRSF002133">
    <property type="entry name" value="Ribosomal_S12/S23"/>
    <property type="match status" value="1"/>
</dbReference>
<dbReference type="PRINTS" id="PR01034">
    <property type="entry name" value="RIBOSOMALS12"/>
</dbReference>
<dbReference type="SUPFAM" id="SSF50249">
    <property type="entry name" value="Nucleic acid-binding proteins"/>
    <property type="match status" value="1"/>
</dbReference>
<dbReference type="PROSITE" id="PS00055">
    <property type="entry name" value="RIBOSOMAL_S12"/>
    <property type="match status" value="1"/>
</dbReference>
<name>RS12_LIMRJ</name>
<feature type="chain" id="PRO_1000194184" description="Small ribosomal subunit protein uS12">
    <location>
        <begin position="1"/>
        <end position="139"/>
    </location>
</feature>
<feature type="region of interest" description="Disordered" evidence="3">
    <location>
        <begin position="1"/>
        <end position="22"/>
    </location>
</feature>
<feature type="region of interest" description="Disordered" evidence="3">
    <location>
        <begin position="37"/>
        <end position="57"/>
    </location>
</feature>
<feature type="compositionally biased region" description="Basic residues" evidence="3">
    <location>
        <begin position="9"/>
        <end position="19"/>
    </location>
</feature>
<feature type="modified residue" description="3-methylthioaspartic acid" evidence="1">
    <location>
        <position position="102"/>
    </location>
</feature>
<gene>
    <name evidence="2" type="primary">rpsL</name>
    <name type="ordered locus">LAR_1398</name>
</gene>
<keyword id="KW-0488">Methylation</keyword>
<keyword id="KW-0687">Ribonucleoprotein</keyword>
<keyword id="KW-0689">Ribosomal protein</keyword>
<keyword id="KW-0694">RNA-binding</keyword>
<keyword id="KW-0699">rRNA-binding</keyword>
<keyword id="KW-0820">tRNA-binding</keyword>
<evidence type="ECO:0000250" key="1"/>
<evidence type="ECO:0000255" key="2">
    <source>
        <dbReference type="HAMAP-Rule" id="MF_00403"/>
    </source>
</evidence>
<evidence type="ECO:0000256" key="3">
    <source>
        <dbReference type="SAM" id="MobiDB-lite"/>
    </source>
</evidence>
<evidence type="ECO:0000305" key="4"/>
<comment type="function">
    <text evidence="2">With S4 and S5 plays an important role in translational accuracy.</text>
</comment>
<comment type="function">
    <text evidence="2">Interacts with and stabilizes bases of the 16S rRNA that are involved in tRNA selection in the A site and with the mRNA backbone. Located at the interface of the 30S and 50S subunits, it traverses the body of the 30S subunit contacting proteins on the other side and probably holding the rRNA structure together. The combined cluster of proteins S8, S12 and S17 appears to hold together the shoulder and platform of the 30S subunit.</text>
</comment>
<comment type="subunit">
    <text evidence="2">Part of the 30S ribosomal subunit. Contacts proteins S8 and S17. May interact with IF1 in the 30S initiation complex.</text>
</comment>
<comment type="similarity">
    <text evidence="2">Belongs to the universal ribosomal protein uS12 family.</text>
</comment>